<proteinExistence type="evidence at transcript level"/>
<protein>
    <recommendedName>
        <fullName>Galectin-1</fullName>
        <shortName>Gal-1</shortName>
    </recommendedName>
    <alternativeName>
        <fullName>Lectin galactoside-binding soluble 1</fullName>
    </alternativeName>
</protein>
<accession>Q49I35</accession>
<comment type="function">
    <text evidence="2">Lectin that binds beta-galactoside and a wide array of complex carbohydrates. Plays a role in regulating apoptosis, cell proliferation and cell differentiation. Inhibits CD45 protein phosphatase activity and therefore the dephosphorylation of Lyn kinase. Strong inducer of T-cell apoptosis.</text>
</comment>
<comment type="subunit">
    <text evidence="2">Homodimer. Binds LGALS3BP. Interacts with CD2, CD3, CD4, CD6, CD7, CD43, ALCAM and CD45. Interacts with laminin (via poly-N-acetyllactosamine). Interacts with SUSD2. Interacts with cargo receptor TMED10; the interaction mediates the translocation from the cytoplasm into the ERGIC (endoplasmic reticulum-Golgi intermediate compartment) and thereby secretion.</text>
</comment>
<comment type="subcellular location">
    <subcellularLocation>
        <location evidence="2">Secreted</location>
        <location evidence="2">Extracellular space</location>
        <location evidence="2">Extracellular matrix</location>
    </subcellularLocation>
    <subcellularLocation>
        <location evidence="2">Cytoplasm</location>
    </subcellularLocation>
    <subcellularLocation>
        <location evidence="2">Secreted</location>
    </subcellularLocation>
    <text evidence="2">Can be secreted; the secretion is dependent on protein unfolding and facilitated by the cargo receptor TMED10; it results in protein translocation from the cytoplasm into the ERGIC (endoplasmic reticulum-Golgi intermediate compartment) followed by vesicle entry and secretion.</text>
</comment>
<feature type="initiator methionine" description="Removed" evidence="2">
    <location>
        <position position="1"/>
    </location>
</feature>
<feature type="chain" id="PRO_0000231038" description="Galectin-1">
    <location>
        <begin position="2"/>
        <end position="135"/>
    </location>
</feature>
<feature type="domain" description="Galectin" evidence="4">
    <location>
        <begin position="4"/>
        <end position="135"/>
    </location>
</feature>
<feature type="binding site" evidence="1">
    <location>
        <begin position="45"/>
        <end position="49"/>
    </location>
    <ligand>
        <name>a beta-D-galactoside</name>
        <dbReference type="ChEBI" id="CHEBI:28034"/>
    </ligand>
</feature>
<feature type="binding site" evidence="1">
    <location>
        <position position="53"/>
    </location>
    <ligand>
        <name>a beta-D-galactoside</name>
        <dbReference type="ChEBI" id="CHEBI:28034"/>
    </ligand>
</feature>
<feature type="binding site" evidence="1">
    <location>
        <position position="62"/>
    </location>
    <ligand>
        <name>a beta-D-galactoside</name>
        <dbReference type="ChEBI" id="CHEBI:28034"/>
    </ligand>
</feature>
<feature type="binding site" evidence="1">
    <location>
        <begin position="69"/>
        <end position="72"/>
    </location>
    <ligand>
        <name>a beta-D-galactoside</name>
        <dbReference type="ChEBI" id="CHEBI:28034"/>
    </ligand>
</feature>
<feature type="modified residue" description="N-acetylalanine" evidence="2">
    <location>
        <position position="2"/>
    </location>
</feature>
<feature type="modified residue" description="N6-acetyllysine" evidence="3">
    <location>
        <position position="13"/>
    </location>
</feature>
<feature type="modified residue" description="N6-acetyllysine" evidence="3">
    <location>
        <position position="19"/>
    </location>
</feature>
<feature type="modified residue" description="N6-acetyllysine" evidence="2">
    <location>
        <position position="29"/>
    </location>
</feature>
<feature type="modified residue" description="Phosphoserine" evidence="2">
    <location>
        <position position="30"/>
    </location>
</feature>
<feature type="modified residue" description="N6-acetyllysine" evidence="3">
    <location>
        <position position="128"/>
    </location>
</feature>
<evidence type="ECO:0000250" key="1"/>
<evidence type="ECO:0000250" key="2">
    <source>
        <dbReference type="UniProtKB" id="P09382"/>
    </source>
</evidence>
<evidence type="ECO:0000250" key="3">
    <source>
        <dbReference type="UniProtKB" id="P16045"/>
    </source>
</evidence>
<evidence type="ECO:0000255" key="4">
    <source>
        <dbReference type="PROSITE-ProRule" id="PRU00639"/>
    </source>
</evidence>
<dbReference type="EMBL" id="AY885253">
    <property type="protein sequence ID" value="AAX85355.1"/>
    <property type="molecule type" value="mRNA"/>
</dbReference>
<dbReference type="SMR" id="Q49I35"/>
<dbReference type="FunCoup" id="Q49I35">
    <property type="interactions" value="834"/>
</dbReference>
<dbReference type="IntAct" id="Q49I35">
    <property type="interactions" value="1"/>
</dbReference>
<dbReference type="STRING" id="9823.ENSSSCP00000059934"/>
<dbReference type="PaxDb" id="9823-ENSSSCP00000000129"/>
<dbReference type="PeptideAtlas" id="Q49I35"/>
<dbReference type="eggNOG" id="KOG3587">
    <property type="taxonomic scope" value="Eukaryota"/>
</dbReference>
<dbReference type="InParanoid" id="Q49I35"/>
<dbReference type="ChiTaRS" id="LGALS1">
    <property type="organism name" value="pig"/>
</dbReference>
<dbReference type="Proteomes" id="UP000008227">
    <property type="component" value="Unplaced"/>
</dbReference>
<dbReference type="Proteomes" id="UP000314985">
    <property type="component" value="Unplaced"/>
</dbReference>
<dbReference type="Proteomes" id="UP000694570">
    <property type="component" value="Unplaced"/>
</dbReference>
<dbReference type="Proteomes" id="UP000694571">
    <property type="component" value="Unplaced"/>
</dbReference>
<dbReference type="Proteomes" id="UP000694720">
    <property type="component" value="Unplaced"/>
</dbReference>
<dbReference type="Proteomes" id="UP000694722">
    <property type="component" value="Unplaced"/>
</dbReference>
<dbReference type="Proteomes" id="UP000694723">
    <property type="component" value="Unplaced"/>
</dbReference>
<dbReference type="Proteomes" id="UP000694724">
    <property type="component" value="Unplaced"/>
</dbReference>
<dbReference type="Proteomes" id="UP000694725">
    <property type="component" value="Unplaced"/>
</dbReference>
<dbReference type="Proteomes" id="UP000694726">
    <property type="component" value="Unplaced"/>
</dbReference>
<dbReference type="Proteomes" id="UP000694727">
    <property type="component" value="Unplaced"/>
</dbReference>
<dbReference type="Proteomes" id="UP000694728">
    <property type="component" value="Unplaced"/>
</dbReference>
<dbReference type="GO" id="GO:0005737">
    <property type="term" value="C:cytoplasm"/>
    <property type="evidence" value="ECO:0007669"/>
    <property type="project" value="UniProtKB-SubCell"/>
</dbReference>
<dbReference type="GO" id="GO:0005615">
    <property type="term" value="C:extracellular space"/>
    <property type="evidence" value="ECO:0000318"/>
    <property type="project" value="GO_Central"/>
</dbReference>
<dbReference type="GO" id="GO:0030395">
    <property type="term" value="F:lactose binding"/>
    <property type="evidence" value="ECO:0000318"/>
    <property type="project" value="GO_Central"/>
</dbReference>
<dbReference type="GO" id="GO:0043236">
    <property type="term" value="F:laminin binding"/>
    <property type="evidence" value="ECO:0000318"/>
    <property type="project" value="GO_Central"/>
</dbReference>
<dbReference type="GO" id="GO:0006915">
    <property type="term" value="P:apoptotic process"/>
    <property type="evidence" value="ECO:0007669"/>
    <property type="project" value="UniProtKB-KW"/>
</dbReference>
<dbReference type="CDD" id="cd00070">
    <property type="entry name" value="GLECT"/>
    <property type="match status" value="1"/>
</dbReference>
<dbReference type="FunFam" id="2.60.120.200:FF:000021">
    <property type="entry name" value="Galectin"/>
    <property type="match status" value="1"/>
</dbReference>
<dbReference type="Gene3D" id="2.60.120.200">
    <property type="match status" value="1"/>
</dbReference>
<dbReference type="InterPro" id="IPR013320">
    <property type="entry name" value="ConA-like_dom_sf"/>
</dbReference>
<dbReference type="InterPro" id="IPR044156">
    <property type="entry name" value="Galectin-like"/>
</dbReference>
<dbReference type="InterPro" id="IPR001079">
    <property type="entry name" value="Galectin_CRD"/>
</dbReference>
<dbReference type="PANTHER" id="PTHR11346">
    <property type="entry name" value="GALECTIN"/>
    <property type="match status" value="1"/>
</dbReference>
<dbReference type="PANTHER" id="PTHR11346:SF97">
    <property type="entry name" value="GALECTIN-1"/>
    <property type="match status" value="1"/>
</dbReference>
<dbReference type="Pfam" id="PF00337">
    <property type="entry name" value="Gal-bind_lectin"/>
    <property type="match status" value="1"/>
</dbReference>
<dbReference type="SMART" id="SM00908">
    <property type="entry name" value="Gal-bind_lectin"/>
    <property type="match status" value="1"/>
</dbReference>
<dbReference type="SMART" id="SM00276">
    <property type="entry name" value="GLECT"/>
    <property type="match status" value="1"/>
</dbReference>
<dbReference type="SUPFAM" id="SSF49899">
    <property type="entry name" value="Concanavalin A-like lectins/glucanases"/>
    <property type="match status" value="1"/>
</dbReference>
<dbReference type="PROSITE" id="PS51304">
    <property type="entry name" value="GALECTIN"/>
    <property type="match status" value="1"/>
</dbReference>
<gene>
    <name type="primary">LGALS1</name>
</gene>
<organism>
    <name type="scientific">Sus scrofa</name>
    <name type="common">Pig</name>
    <dbReference type="NCBI Taxonomy" id="9823"/>
    <lineage>
        <taxon>Eukaryota</taxon>
        <taxon>Metazoa</taxon>
        <taxon>Chordata</taxon>
        <taxon>Craniata</taxon>
        <taxon>Vertebrata</taxon>
        <taxon>Euteleostomi</taxon>
        <taxon>Mammalia</taxon>
        <taxon>Eutheria</taxon>
        <taxon>Laurasiatheria</taxon>
        <taxon>Artiodactyla</taxon>
        <taxon>Suina</taxon>
        <taxon>Suidae</taxon>
        <taxon>Sus</taxon>
    </lineage>
</organism>
<name>LEG1_PIG</name>
<keyword id="KW-0007">Acetylation</keyword>
<keyword id="KW-0053">Apoptosis</keyword>
<keyword id="KW-0963">Cytoplasm</keyword>
<keyword id="KW-0272">Extracellular matrix</keyword>
<keyword id="KW-0430">Lectin</keyword>
<keyword id="KW-0597">Phosphoprotein</keyword>
<keyword id="KW-1185">Reference proteome</keyword>
<keyword id="KW-0964">Secreted</keyword>
<sequence>MACGLVASNLNLKPGECLKVRGEVAPDAKSFVLNLGKDSNNLCLHFNPRFDMHGDINTIVCNSKDGGAWGAEQRESAFPFQPGSVVEVCISFGQTDLTIKLPDGYEFSFPNRLNLEAIEHLAADGDFKIKCVAFE</sequence>
<reference key="1">
    <citation type="submission" date="2005-01" db="EMBL/GenBank/DDBJ databases">
        <title>Isolation and sequence analysis of galectin 1.</title>
        <authorList>
            <person name="Niu B.Y."/>
            <person name="Li F.E."/>
            <person name="Xiong Y.Z."/>
        </authorList>
    </citation>
    <scope>NUCLEOTIDE SEQUENCE [MRNA]</scope>
</reference>